<protein>
    <recommendedName>
        <fullName evidence="1">Aspartate--ammonia ligase</fullName>
        <ecNumber evidence="1">6.3.1.1</ecNumber>
    </recommendedName>
    <alternativeName>
        <fullName evidence="1">Asparagine synthetase A</fullName>
    </alternativeName>
</protein>
<evidence type="ECO:0000255" key="1">
    <source>
        <dbReference type="HAMAP-Rule" id="MF_00555"/>
    </source>
</evidence>
<dbReference type="EC" id="6.3.1.1" evidence="1"/>
<dbReference type="EMBL" id="CP000947">
    <property type="protein sequence ID" value="ACA32244.1"/>
    <property type="molecule type" value="Genomic_DNA"/>
</dbReference>
<dbReference type="RefSeq" id="WP_012341421.1">
    <property type="nucleotide sequence ID" value="NC_010519.1"/>
</dbReference>
<dbReference type="SMR" id="B0US32"/>
<dbReference type="STRING" id="228400.HSM_0591"/>
<dbReference type="GeneID" id="31486876"/>
<dbReference type="KEGG" id="hsm:HSM_0591"/>
<dbReference type="HOGENOM" id="CLU_071543_0_0_6"/>
<dbReference type="UniPathway" id="UPA00134">
    <property type="reaction ID" value="UER00194"/>
</dbReference>
<dbReference type="GO" id="GO:0005829">
    <property type="term" value="C:cytosol"/>
    <property type="evidence" value="ECO:0007669"/>
    <property type="project" value="TreeGrafter"/>
</dbReference>
<dbReference type="GO" id="GO:0004071">
    <property type="term" value="F:aspartate-ammonia ligase activity"/>
    <property type="evidence" value="ECO:0007669"/>
    <property type="project" value="UniProtKB-UniRule"/>
</dbReference>
<dbReference type="GO" id="GO:0005524">
    <property type="term" value="F:ATP binding"/>
    <property type="evidence" value="ECO:0007669"/>
    <property type="project" value="UniProtKB-UniRule"/>
</dbReference>
<dbReference type="GO" id="GO:0070981">
    <property type="term" value="P:L-asparagine biosynthetic process"/>
    <property type="evidence" value="ECO:0007669"/>
    <property type="project" value="UniProtKB-UniRule"/>
</dbReference>
<dbReference type="Gene3D" id="3.30.930.10">
    <property type="entry name" value="Bira Bifunctional Protein, Domain 2"/>
    <property type="match status" value="1"/>
</dbReference>
<dbReference type="HAMAP" id="MF_00555">
    <property type="entry name" value="AsnA"/>
    <property type="match status" value="1"/>
</dbReference>
<dbReference type="InterPro" id="IPR006195">
    <property type="entry name" value="aa-tRNA-synth_II"/>
</dbReference>
<dbReference type="InterPro" id="IPR045864">
    <property type="entry name" value="aa-tRNA-synth_II/BPL/LPL"/>
</dbReference>
<dbReference type="InterPro" id="IPR004618">
    <property type="entry name" value="AsnA"/>
</dbReference>
<dbReference type="NCBIfam" id="TIGR00669">
    <property type="entry name" value="asnA"/>
    <property type="match status" value="1"/>
</dbReference>
<dbReference type="PANTHER" id="PTHR30073">
    <property type="entry name" value="ASPARTATE--AMMONIA LIGASE"/>
    <property type="match status" value="1"/>
</dbReference>
<dbReference type="PANTHER" id="PTHR30073:SF5">
    <property type="entry name" value="ASPARTATE--AMMONIA LIGASE"/>
    <property type="match status" value="1"/>
</dbReference>
<dbReference type="Pfam" id="PF03590">
    <property type="entry name" value="AsnA"/>
    <property type="match status" value="1"/>
</dbReference>
<dbReference type="PIRSF" id="PIRSF001555">
    <property type="entry name" value="Asp_ammon_ligase"/>
    <property type="match status" value="1"/>
</dbReference>
<dbReference type="SUPFAM" id="SSF55681">
    <property type="entry name" value="Class II aaRS and biotin synthetases"/>
    <property type="match status" value="1"/>
</dbReference>
<dbReference type="PROSITE" id="PS50862">
    <property type="entry name" value="AA_TRNA_LIGASE_II"/>
    <property type="match status" value="1"/>
</dbReference>
<feature type="chain" id="PRO_1000081982" description="Aspartate--ammonia ligase">
    <location>
        <begin position="1"/>
        <end position="330"/>
    </location>
</feature>
<sequence>MKKSFILQQQEISFAKNTFTEKLIEHLGIIEVQGPILSQVGNGIQDNLSGTEKAVQVNVKQITDAKFEVVHSLAKWKRHTLARFNFAENEGLFVHMKALRPDEDSLDQTHSVYVDQWDWEKVIPTGRRNLAYLKETVRSIYQAILETEDAVHQKFGLSKFLPREITFIHSEELVQRYPELNDKQRENAICKEYGAVFLMGIGGVLSDGKPHDKRAPDYDDWTTPSEGEYLGLNGDILVWNPVLERAFEVSSMGIRVDETALRKQLALTGDEDRLQFDWHQDLVNGRLPLSIGGGIGQSRLAMLLLQKKHIGEVQSSVWPKVVTEQFENIL</sequence>
<organism>
    <name type="scientific">Histophilus somni (strain 2336)</name>
    <name type="common">Haemophilus somnus</name>
    <dbReference type="NCBI Taxonomy" id="228400"/>
    <lineage>
        <taxon>Bacteria</taxon>
        <taxon>Pseudomonadati</taxon>
        <taxon>Pseudomonadota</taxon>
        <taxon>Gammaproteobacteria</taxon>
        <taxon>Pasteurellales</taxon>
        <taxon>Pasteurellaceae</taxon>
        <taxon>Histophilus</taxon>
    </lineage>
</organism>
<keyword id="KW-0028">Amino-acid biosynthesis</keyword>
<keyword id="KW-0061">Asparagine biosynthesis</keyword>
<keyword id="KW-0067">ATP-binding</keyword>
<keyword id="KW-0963">Cytoplasm</keyword>
<keyword id="KW-0436">Ligase</keyword>
<keyword id="KW-0547">Nucleotide-binding</keyword>
<gene>
    <name evidence="1" type="primary">asnA</name>
    <name type="ordered locus">HSM_0591</name>
</gene>
<reference key="1">
    <citation type="submission" date="2008-02" db="EMBL/GenBank/DDBJ databases">
        <title>Complete sequence of Haemophilus somnus 2336.</title>
        <authorList>
            <consortium name="US DOE Joint Genome Institute"/>
            <person name="Siddaramappa S."/>
            <person name="Duncan A.J."/>
            <person name="Challacombe J.F."/>
            <person name="Rainey D."/>
            <person name="Gillaspy A.F."/>
            <person name="Carson M."/>
            <person name="Gipson J."/>
            <person name="Gipson M."/>
            <person name="Bruce D."/>
            <person name="Detter J.C."/>
            <person name="Han C.S."/>
            <person name="Land M."/>
            <person name="Tapia R."/>
            <person name="Thompson L.S."/>
            <person name="Orvis J."/>
            <person name="Zaitshik J."/>
            <person name="Barnes G."/>
            <person name="Brettin T.S."/>
            <person name="Dyer D.W."/>
            <person name="Inzana T.J."/>
        </authorList>
    </citation>
    <scope>NUCLEOTIDE SEQUENCE [LARGE SCALE GENOMIC DNA]</scope>
    <source>
        <strain>2336</strain>
    </source>
</reference>
<proteinExistence type="inferred from homology"/>
<comment type="catalytic activity">
    <reaction evidence="1">
        <text>L-aspartate + NH4(+) + ATP = L-asparagine + AMP + diphosphate + H(+)</text>
        <dbReference type="Rhea" id="RHEA:11372"/>
        <dbReference type="ChEBI" id="CHEBI:15378"/>
        <dbReference type="ChEBI" id="CHEBI:28938"/>
        <dbReference type="ChEBI" id="CHEBI:29991"/>
        <dbReference type="ChEBI" id="CHEBI:30616"/>
        <dbReference type="ChEBI" id="CHEBI:33019"/>
        <dbReference type="ChEBI" id="CHEBI:58048"/>
        <dbReference type="ChEBI" id="CHEBI:456215"/>
        <dbReference type="EC" id="6.3.1.1"/>
    </reaction>
</comment>
<comment type="pathway">
    <text evidence="1">Amino-acid biosynthesis; L-asparagine biosynthesis; L-asparagine from L-aspartate (ammonia route): step 1/1.</text>
</comment>
<comment type="subcellular location">
    <subcellularLocation>
        <location evidence="1">Cytoplasm</location>
    </subcellularLocation>
</comment>
<comment type="similarity">
    <text evidence="1">Belongs to the class-II aminoacyl-tRNA synthetase family. AsnA subfamily.</text>
</comment>
<name>ASNA_HISS2</name>
<accession>B0US32</accession>